<name>ENGB_COXB2</name>
<feature type="chain" id="PRO_1000115967" description="Probable GTP-binding protein EngB">
    <location>
        <begin position="1"/>
        <end position="205"/>
    </location>
</feature>
<feature type="domain" description="EngB-type G" evidence="1">
    <location>
        <begin position="29"/>
        <end position="203"/>
    </location>
</feature>
<feature type="binding site" evidence="1">
    <location>
        <begin position="37"/>
        <end position="44"/>
    </location>
    <ligand>
        <name>GTP</name>
        <dbReference type="ChEBI" id="CHEBI:37565"/>
    </ligand>
</feature>
<feature type="binding site" evidence="1">
    <location>
        <position position="44"/>
    </location>
    <ligand>
        <name>Mg(2+)</name>
        <dbReference type="ChEBI" id="CHEBI:18420"/>
    </ligand>
</feature>
<feature type="binding site" evidence="1">
    <location>
        <begin position="64"/>
        <end position="68"/>
    </location>
    <ligand>
        <name>GTP</name>
        <dbReference type="ChEBI" id="CHEBI:37565"/>
    </ligand>
</feature>
<feature type="binding site" evidence="1">
    <location>
        <position position="66"/>
    </location>
    <ligand>
        <name>Mg(2+)</name>
        <dbReference type="ChEBI" id="CHEBI:18420"/>
    </ligand>
</feature>
<feature type="binding site" evidence="1">
    <location>
        <begin position="82"/>
        <end position="85"/>
    </location>
    <ligand>
        <name>GTP</name>
        <dbReference type="ChEBI" id="CHEBI:37565"/>
    </ligand>
</feature>
<feature type="binding site" evidence="1">
    <location>
        <begin position="149"/>
        <end position="152"/>
    </location>
    <ligand>
        <name>GTP</name>
        <dbReference type="ChEBI" id="CHEBI:37565"/>
    </ligand>
</feature>
<feature type="binding site" evidence="1">
    <location>
        <begin position="182"/>
        <end position="184"/>
    </location>
    <ligand>
        <name>GTP</name>
        <dbReference type="ChEBI" id="CHEBI:37565"/>
    </ligand>
</feature>
<reference key="1">
    <citation type="journal article" date="2009" name="Infect. Immun.">
        <title>Comparative genomics reveal extensive transposon-mediated genomic plasticity and diversity among potential effector proteins within the genus Coxiella.</title>
        <authorList>
            <person name="Beare P.A."/>
            <person name="Unsworth N."/>
            <person name="Andoh M."/>
            <person name="Voth D.E."/>
            <person name="Omsland A."/>
            <person name="Gilk S.D."/>
            <person name="Williams K.P."/>
            <person name="Sobral B.W."/>
            <person name="Kupko J.J. III"/>
            <person name="Porcella S.F."/>
            <person name="Samuel J.E."/>
            <person name="Heinzen R.A."/>
        </authorList>
    </citation>
    <scope>NUCLEOTIDE SEQUENCE [LARGE SCALE GENOMIC DNA]</scope>
    <source>
        <strain>CbuG_Q212</strain>
    </source>
</reference>
<evidence type="ECO:0000255" key="1">
    <source>
        <dbReference type="HAMAP-Rule" id="MF_00321"/>
    </source>
</evidence>
<proteinExistence type="inferred from homology"/>
<organism>
    <name type="scientific">Coxiella burnetii (strain CbuG_Q212)</name>
    <name type="common">Coxiella burnetii (strain Q212)</name>
    <dbReference type="NCBI Taxonomy" id="434923"/>
    <lineage>
        <taxon>Bacteria</taxon>
        <taxon>Pseudomonadati</taxon>
        <taxon>Pseudomonadota</taxon>
        <taxon>Gammaproteobacteria</taxon>
        <taxon>Legionellales</taxon>
        <taxon>Coxiellaceae</taxon>
        <taxon>Coxiella</taxon>
    </lineage>
</organism>
<gene>
    <name evidence="1" type="primary">engB</name>
    <name type="ordered locus">CbuG_0154</name>
</gene>
<protein>
    <recommendedName>
        <fullName evidence="1">Probable GTP-binding protein EngB</fullName>
    </recommendedName>
</protein>
<accession>B6J2X4</accession>
<keyword id="KW-0131">Cell cycle</keyword>
<keyword id="KW-0132">Cell division</keyword>
<keyword id="KW-0342">GTP-binding</keyword>
<keyword id="KW-0460">Magnesium</keyword>
<keyword id="KW-0479">Metal-binding</keyword>
<keyword id="KW-0547">Nucleotide-binding</keyword>
<keyword id="KW-0717">Septation</keyword>
<comment type="function">
    <text evidence="1">Necessary for normal cell division and for the maintenance of normal septation.</text>
</comment>
<comment type="cofactor">
    <cofactor evidence="1">
        <name>Mg(2+)</name>
        <dbReference type="ChEBI" id="CHEBI:18420"/>
    </cofactor>
</comment>
<comment type="similarity">
    <text evidence="1">Belongs to the TRAFAC class TrmE-Era-EngA-EngB-Septin-like GTPase superfamily. EngB GTPase family.</text>
</comment>
<sequence length="205" mass="23088">MTEFESAPAYQEAKYLTSAAEFDQLPPDQGAEIAFIGRSNAGKSSALNIITGIKGLARTSKTPGRTQMINFFALNEHERLVDLPGYGYAKVPRMVQKRWEELVDSYLKKRRCLKGLVVVMDIRHPLKEMDEDVIEWAVNYDIPIHILLTKSDKLSQNAAKKTLGEVQTAISAYGEKLTLQLFSSHDRTGLDEVKAVLSQWFRSEP</sequence>
<dbReference type="EMBL" id="CP001019">
    <property type="protein sequence ID" value="ACJ17604.1"/>
    <property type="molecule type" value="Genomic_DNA"/>
</dbReference>
<dbReference type="SMR" id="B6J2X4"/>
<dbReference type="KEGG" id="cbg:CbuG_0154"/>
<dbReference type="HOGENOM" id="CLU_033732_1_0_6"/>
<dbReference type="GO" id="GO:0005829">
    <property type="term" value="C:cytosol"/>
    <property type="evidence" value="ECO:0007669"/>
    <property type="project" value="TreeGrafter"/>
</dbReference>
<dbReference type="GO" id="GO:0005525">
    <property type="term" value="F:GTP binding"/>
    <property type="evidence" value="ECO:0007669"/>
    <property type="project" value="UniProtKB-UniRule"/>
</dbReference>
<dbReference type="GO" id="GO:0046872">
    <property type="term" value="F:metal ion binding"/>
    <property type="evidence" value="ECO:0007669"/>
    <property type="project" value="UniProtKB-KW"/>
</dbReference>
<dbReference type="GO" id="GO:0000917">
    <property type="term" value="P:division septum assembly"/>
    <property type="evidence" value="ECO:0007669"/>
    <property type="project" value="UniProtKB-KW"/>
</dbReference>
<dbReference type="CDD" id="cd01876">
    <property type="entry name" value="YihA_EngB"/>
    <property type="match status" value="1"/>
</dbReference>
<dbReference type="FunFam" id="3.40.50.300:FF:000098">
    <property type="entry name" value="Probable GTP-binding protein EngB"/>
    <property type="match status" value="1"/>
</dbReference>
<dbReference type="Gene3D" id="3.40.50.300">
    <property type="entry name" value="P-loop containing nucleotide triphosphate hydrolases"/>
    <property type="match status" value="1"/>
</dbReference>
<dbReference type="HAMAP" id="MF_00321">
    <property type="entry name" value="GTPase_EngB"/>
    <property type="match status" value="1"/>
</dbReference>
<dbReference type="InterPro" id="IPR030393">
    <property type="entry name" value="G_ENGB_dom"/>
</dbReference>
<dbReference type="InterPro" id="IPR006073">
    <property type="entry name" value="GTP-bd"/>
</dbReference>
<dbReference type="InterPro" id="IPR019987">
    <property type="entry name" value="GTP-bd_ribosome_bio_YsxC"/>
</dbReference>
<dbReference type="InterPro" id="IPR027417">
    <property type="entry name" value="P-loop_NTPase"/>
</dbReference>
<dbReference type="NCBIfam" id="TIGR03598">
    <property type="entry name" value="GTPase_YsxC"/>
    <property type="match status" value="1"/>
</dbReference>
<dbReference type="PANTHER" id="PTHR11649:SF13">
    <property type="entry name" value="ENGB-TYPE G DOMAIN-CONTAINING PROTEIN"/>
    <property type="match status" value="1"/>
</dbReference>
<dbReference type="PANTHER" id="PTHR11649">
    <property type="entry name" value="MSS1/TRME-RELATED GTP-BINDING PROTEIN"/>
    <property type="match status" value="1"/>
</dbReference>
<dbReference type="Pfam" id="PF01926">
    <property type="entry name" value="MMR_HSR1"/>
    <property type="match status" value="1"/>
</dbReference>
<dbReference type="SUPFAM" id="SSF52540">
    <property type="entry name" value="P-loop containing nucleoside triphosphate hydrolases"/>
    <property type="match status" value="1"/>
</dbReference>
<dbReference type="PROSITE" id="PS51706">
    <property type="entry name" value="G_ENGB"/>
    <property type="match status" value="1"/>
</dbReference>